<dbReference type="EC" id="2.7.1.134" evidence="4"/>
<dbReference type="EC" id="2.7.1.159" evidence="4"/>
<dbReference type="EMBL" id="DT820636">
    <property type="status" value="NOT_ANNOTATED_CDS"/>
    <property type="molecule type" value="mRNA"/>
</dbReference>
<dbReference type="EMBL" id="CV982275">
    <property type="status" value="NOT_ANNOTATED_CDS"/>
    <property type="molecule type" value="mRNA"/>
</dbReference>
<dbReference type="RefSeq" id="NP_001179418.1">
    <property type="nucleotide sequence ID" value="NM_001192489.3"/>
</dbReference>
<dbReference type="RefSeq" id="XP_015314814.1">
    <property type="nucleotide sequence ID" value="XM_015459328.3"/>
</dbReference>
<dbReference type="SMR" id="P0C0T1"/>
<dbReference type="FunCoup" id="P0C0T1">
    <property type="interactions" value="977"/>
</dbReference>
<dbReference type="STRING" id="9913.ENSBTAP00000042643"/>
<dbReference type="PaxDb" id="9913-ENSBTAP00000042643"/>
<dbReference type="GeneID" id="518488"/>
<dbReference type="KEGG" id="bta:518488"/>
<dbReference type="CTD" id="3705"/>
<dbReference type="VEuPathDB" id="HostDB:ENSBTAG00000009845"/>
<dbReference type="eggNOG" id="ENOG502QQS1">
    <property type="taxonomic scope" value="Eukaryota"/>
</dbReference>
<dbReference type="HOGENOM" id="CLU_041857_1_1_1"/>
<dbReference type="InParanoid" id="P0C0T1"/>
<dbReference type="OMA" id="QHLYNRQ"/>
<dbReference type="OrthoDB" id="25308at2759"/>
<dbReference type="TreeFam" id="TF329288"/>
<dbReference type="Reactome" id="R-BTA-1855167">
    <property type="pathway name" value="Synthesis of pyrophosphates in the cytosol"/>
</dbReference>
<dbReference type="Reactome" id="R-BTA-1855204">
    <property type="pathway name" value="Synthesis of IP3 and IP4 in the cytosol"/>
</dbReference>
<dbReference type="Reactome" id="R-BTA-983231">
    <property type="pathway name" value="Factors involved in megakaryocyte development and platelet production"/>
</dbReference>
<dbReference type="SABIO-RK" id="P0C0T1"/>
<dbReference type="Proteomes" id="UP000009136">
    <property type="component" value="Chromosome 21"/>
</dbReference>
<dbReference type="Bgee" id="ENSBTAG00000009845">
    <property type="expression patterns" value="Expressed in diaphragm and 103 other cell types or tissues"/>
</dbReference>
<dbReference type="GO" id="GO:0005524">
    <property type="term" value="F:ATP binding"/>
    <property type="evidence" value="ECO:0007669"/>
    <property type="project" value="UniProtKB-KW"/>
</dbReference>
<dbReference type="GO" id="GO:0016787">
    <property type="term" value="F:hydrolase activity"/>
    <property type="evidence" value="ECO:0007669"/>
    <property type="project" value="UniProtKB-KW"/>
</dbReference>
<dbReference type="GO" id="GO:0000825">
    <property type="term" value="F:inositol-1,3,4,5-tetrakisphosphate 6-kinase activity"/>
    <property type="evidence" value="ECO:0000250"/>
    <property type="project" value="UniProtKB"/>
</dbReference>
<dbReference type="GO" id="GO:0052726">
    <property type="term" value="F:inositol-1,3,4-trisphosphate 5-kinase activity"/>
    <property type="evidence" value="ECO:0000318"/>
    <property type="project" value="GO_Central"/>
</dbReference>
<dbReference type="GO" id="GO:0052725">
    <property type="term" value="F:inositol-1,3,4-trisphosphate 6-kinase activity"/>
    <property type="evidence" value="ECO:0000318"/>
    <property type="project" value="GO_Central"/>
</dbReference>
<dbReference type="GO" id="GO:0047325">
    <property type="term" value="F:inositol-3,4,5,6-tetrakisphosphate 1-kinase activity"/>
    <property type="evidence" value="ECO:0000318"/>
    <property type="project" value="GO_Central"/>
</dbReference>
<dbReference type="GO" id="GO:0052835">
    <property type="term" value="F:inositol-3,4,6-trisphosphate 1-kinase activity"/>
    <property type="evidence" value="ECO:0007669"/>
    <property type="project" value="RHEA"/>
</dbReference>
<dbReference type="GO" id="GO:0016853">
    <property type="term" value="F:isomerase activity"/>
    <property type="evidence" value="ECO:0007669"/>
    <property type="project" value="UniProtKB-KW"/>
</dbReference>
<dbReference type="GO" id="GO:0000287">
    <property type="term" value="F:magnesium ion binding"/>
    <property type="evidence" value="ECO:0007669"/>
    <property type="project" value="InterPro"/>
</dbReference>
<dbReference type="GO" id="GO:0032957">
    <property type="term" value="P:inositol trisphosphate metabolic process"/>
    <property type="evidence" value="ECO:0007669"/>
    <property type="project" value="InterPro"/>
</dbReference>
<dbReference type="GO" id="GO:0070266">
    <property type="term" value="P:necroptotic process"/>
    <property type="evidence" value="ECO:0000250"/>
    <property type="project" value="UniProtKB"/>
</dbReference>
<dbReference type="FunFam" id="3.30.1490.220:FF:000001">
    <property type="entry name" value="Inositol-tetrakisphosphate 1-kinase"/>
    <property type="match status" value="1"/>
</dbReference>
<dbReference type="FunFam" id="3.40.50.11370:FF:000001">
    <property type="entry name" value="Inositol-tetrakisphosphate 1-kinase"/>
    <property type="match status" value="1"/>
</dbReference>
<dbReference type="FunFam" id="3.30.470.20:FF:000047">
    <property type="entry name" value="Inositol-tetrakisphosphate 1-kinase 4"/>
    <property type="match status" value="1"/>
</dbReference>
<dbReference type="Gene3D" id="3.30.1490.220">
    <property type="match status" value="1"/>
</dbReference>
<dbReference type="Gene3D" id="3.40.50.11370">
    <property type="match status" value="2"/>
</dbReference>
<dbReference type="InterPro" id="IPR011761">
    <property type="entry name" value="ATP-grasp"/>
</dbReference>
<dbReference type="InterPro" id="IPR008656">
    <property type="entry name" value="Inositol_tetrakis-P_1-kinase"/>
</dbReference>
<dbReference type="InterPro" id="IPR040464">
    <property type="entry name" value="InsP(3)kin_ATP-grasp"/>
</dbReference>
<dbReference type="InterPro" id="IPR041429">
    <property type="entry name" value="ITPK1_N"/>
</dbReference>
<dbReference type="PANTHER" id="PTHR14217">
    <property type="entry name" value="INOSITOL-TETRAKISPHOSPHATE 1-KINASE"/>
    <property type="match status" value="1"/>
</dbReference>
<dbReference type="PANTHER" id="PTHR14217:SF1">
    <property type="entry name" value="INOSITOL-TETRAKISPHOSPHATE 1-KINASE"/>
    <property type="match status" value="1"/>
</dbReference>
<dbReference type="Pfam" id="PF05770">
    <property type="entry name" value="Ins134_P3_kin"/>
    <property type="match status" value="1"/>
</dbReference>
<dbReference type="Pfam" id="PF17927">
    <property type="entry name" value="Ins134_P3_kin_N"/>
    <property type="match status" value="1"/>
</dbReference>
<dbReference type="SUPFAM" id="SSF56059">
    <property type="entry name" value="Glutathione synthetase ATP-binding domain-like"/>
    <property type="match status" value="1"/>
</dbReference>
<dbReference type="PROSITE" id="PS50975">
    <property type="entry name" value="ATP_GRASP"/>
    <property type="match status" value="1"/>
</dbReference>
<sequence length="419" mass="45842">MQTFLKGKRVGYWLSEKKIKKLNFQAFAELCRKRGIEVVQLNLSRPIEEQGPLDVIIHKLTDVILEADQNDSQALELVHRFQEYIDAHPETIVLDPLPAIRTLLDRSKSYELIRKIEAYMKDDRICSPPFMELTSLCGDDTMRLLEENGLAFPFICKTRVAHGTNSHEMAIVFNQEGLSAIQPPCVVQNFINHNAVLYKVFVVGESYTVVQRPSLKNFSAGTSDRESIFFNSHNVSKPESSSVLTALDKIEGVFERPSDEVIRELSRALRQALGVSLFGIDIIINNQTGQHAVIDINAFPGYEGVSEFFTDLLNHIASVLQGQSSGVAGAGDVAPLKHSRLLAEQAGGLAAERTCSASPGCCSSMMGQEPPWTPEADMGGVGAGSTAKLPHQRLGCTAGVSPSFQQHCVASLATKASSQ</sequence>
<reference key="1">
    <citation type="journal article" date="1996" name="J. Biol. Chem.">
        <title>Isolation of inositol 1,3,4-trisphosphate 5/6-kinase, cDNA cloning and expression of the recombinant enzyme.</title>
        <authorList>
            <person name="Wilson M.P."/>
            <person name="Majerus P.W."/>
        </authorList>
    </citation>
    <scope>PROTEIN SEQUENCE OF 1-17; 200-211 AND 338-359</scope>
    <scope>ENZYME ACTIVITY</scope>
    <scope>BIOPHYSICOCHEMICAL PROPERTIES</scope>
    <scope>FUNCTION</scope>
    <source>
        <tissue>Brain</tissue>
    </source>
</reference>
<reference key="2">
    <citation type="submission" date="2005-10" db="EMBL/GenBank/DDBJ databases">
        <authorList>
            <consortium name="NIH - Mammalian Gene Collection (MGC) project"/>
        </authorList>
    </citation>
    <scope>NUCLEOTIDE SEQUENCE [LARGE SCALE MRNA] OF 1-245</scope>
    <source>
        <strain>Crossbred X Angus</strain>
        <tissue>Ileum</tissue>
    </source>
</reference>
<reference key="3">
    <citation type="submission" date="2004-12" db="EMBL/GenBank/DDBJ databases">
        <title>Bovine ESTs: focus on female reproduction.</title>
        <authorList>
            <person name="Prather R.S."/>
            <person name="Antoniou E."/>
            <person name="Garverick H.A."/>
            <person name="Green J.A."/>
            <person name="Lucy M.C."/>
            <person name="Roberts R.M."/>
            <person name="Smith M.F."/>
            <person name="Youngquist R.S."/>
        </authorList>
    </citation>
    <scope>NUCLEOTIDE SEQUENCE [LARGE SCALE MRNA] OF 203-419</scope>
</reference>
<proteinExistence type="evidence at protein level"/>
<keyword id="KW-0007">Acetylation</keyword>
<keyword id="KW-0067">ATP-binding</keyword>
<keyword id="KW-0903">Direct protein sequencing</keyword>
<keyword id="KW-0378">Hydrolase</keyword>
<keyword id="KW-0413">Isomerase</keyword>
<keyword id="KW-0418">Kinase</keyword>
<keyword id="KW-0460">Magnesium</keyword>
<keyword id="KW-0479">Metal-binding</keyword>
<keyword id="KW-0547">Nucleotide-binding</keyword>
<keyword id="KW-0597">Phosphoprotein</keyword>
<keyword id="KW-1185">Reference proteome</keyword>
<keyword id="KW-0808">Transferase</keyword>
<protein>
    <recommendedName>
        <fullName>Inositol-tetrakisphosphate 1-kinase</fullName>
        <ecNumber evidence="4">2.7.1.134</ecNumber>
    </recommendedName>
    <alternativeName>
        <fullName>Inositol 1,3,4-trisphosphate 5/6-kinase</fullName>
        <shortName>Inositol-triphosphate 5/6-kinase</shortName>
        <shortName>Ins(1,3,4)P(3) 5/6-kinase</shortName>
        <ecNumber evidence="4">2.7.1.159</ecNumber>
    </alternativeName>
</protein>
<accession>P0C0T1</accession>
<name>ITPK1_BOVIN</name>
<feature type="chain" id="PRO_0000220832" description="Inositol-tetrakisphosphate 1-kinase">
    <location>
        <begin position="1"/>
        <end position="419"/>
    </location>
</feature>
<feature type="domain" description="ATP-grasp" evidence="3">
    <location>
        <begin position="117"/>
        <end position="325"/>
    </location>
</feature>
<feature type="binding site" evidence="1">
    <location>
        <position position="18"/>
    </location>
    <ligand>
        <name>1D-myo-inositol 1,3,4-trisphosphate</name>
        <dbReference type="ChEBI" id="CHEBI:58414"/>
    </ligand>
</feature>
<feature type="binding site" evidence="1">
    <location>
        <position position="106"/>
    </location>
    <ligand>
        <name>ATP</name>
        <dbReference type="ChEBI" id="CHEBI:30616"/>
    </ligand>
</feature>
<feature type="binding site" evidence="1">
    <location>
        <position position="157"/>
    </location>
    <ligand>
        <name>ATP</name>
        <dbReference type="ChEBI" id="CHEBI:30616"/>
    </ligand>
</feature>
<feature type="binding site" evidence="1">
    <location>
        <position position="167"/>
    </location>
    <ligand>
        <name>1D-myo-inositol 1,3,4-trisphosphate</name>
        <dbReference type="ChEBI" id="CHEBI:58414"/>
    </ligand>
</feature>
<feature type="binding site" evidence="3">
    <location>
        <begin position="188"/>
        <end position="199"/>
    </location>
    <ligand>
        <name>ATP</name>
        <dbReference type="ChEBI" id="CHEBI:30616"/>
    </ligand>
</feature>
<feature type="binding site" evidence="1">
    <location>
        <position position="199"/>
    </location>
    <ligand>
        <name>1D-myo-inositol 1,3,4-trisphosphate</name>
        <dbReference type="ChEBI" id="CHEBI:58414"/>
    </ligand>
</feature>
<feature type="binding site" evidence="1">
    <location>
        <position position="214"/>
    </location>
    <ligand>
        <name>ATP</name>
        <dbReference type="ChEBI" id="CHEBI:30616"/>
    </ligand>
</feature>
<feature type="binding site" evidence="1">
    <location>
        <position position="232"/>
    </location>
    <ligand>
        <name>ATP</name>
        <dbReference type="ChEBI" id="CHEBI:30616"/>
    </ligand>
</feature>
<feature type="binding site" evidence="1">
    <location>
        <position position="236"/>
    </location>
    <ligand>
        <name>ATP</name>
        <dbReference type="ChEBI" id="CHEBI:30616"/>
    </ligand>
</feature>
<feature type="binding site" evidence="1">
    <location>
        <position position="281"/>
    </location>
    <ligand>
        <name>Mg(2+)</name>
        <dbReference type="ChEBI" id="CHEBI:18420"/>
        <label>1</label>
    </ligand>
</feature>
<feature type="binding site" evidence="1">
    <location>
        <position position="295"/>
    </location>
    <ligand>
        <name>Mg(2+)</name>
        <dbReference type="ChEBI" id="CHEBI:18420"/>
        <label>1</label>
    </ligand>
</feature>
<feature type="binding site" evidence="1">
    <location>
        <position position="295"/>
    </location>
    <ligand>
        <name>Mg(2+)</name>
        <dbReference type="ChEBI" id="CHEBI:18420"/>
        <label>2</label>
    </ligand>
</feature>
<feature type="binding site" evidence="1">
    <location>
        <position position="297"/>
    </location>
    <ligand>
        <name>1D-myo-inositol 1,3,4-trisphosphate</name>
        <dbReference type="ChEBI" id="CHEBI:58414"/>
    </ligand>
</feature>
<feature type="binding site" evidence="1">
    <location>
        <position position="297"/>
    </location>
    <ligand>
        <name>Mg(2+)</name>
        <dbReference type="ChEBI" id="CHEBI:18420"/>
        <label>2</label>
    </ligand>
</feature>
<feature type="modified residue" description="N6-acetyllysine; by EP300 and CREBBP" evidence="2">
    <location>
        <position position="388"/>
    </location>
</feature>
<feature type="modified residue" description="Phosphoserine" evidence="2">
    <location>
        <position position="401"/>
    </location>
</feature>
<feature type="modified residue" description="N6-acetyllysine; by EP300 and CREBBP" evidence="2">
    <location>
        <position position="415"/>
    </location>
</feature>
<gene>
    <name type="primary">ITPK1</name>
</gene>
<organism>
    <name type="scientific">Bos taurus</name>
    <name type="common">Bovine</name>
    <dbReference type="NCBI Taxonomy" id="9913"/>
    <lineage>
        <taxon>Eukaryota</taxon>
        <taxon>Metazoa</taxon>
        <taxon>Chordata</taxon>
        <taxon>Craniata</taxon>
        <taxon>Vertebrata</taxon>
        <taxon>Euteleostomi</taxon>
        <taxon>Mammalia</taxon>
        <taxon>Eutheria</taxon>
        <taxon>Laurasiatheria</taxon>
        <taxon>Artiodactyla</taxon>
        <taxon>Ruminantia</taxon>
        <taxon>Pecora</taxon>
        <taxon>Bovidae</taxon>
        <taxon>Bovinae</taxon>
        <taxon>Bos</taxon>
    </lineage>
</organism>
<comment type="function">
    <text evidence="2 4">Kinase that can phosphorylate various inositol polyphosphate such as Ins(3,4,5,6)P4 or Ins(1,3,4)P3. Phosphorylates Ins(3,4,5,6)P4 at position 1 to form Ins(1,3,4,5,6)P5. This reaction is thought to have regulatory importance, since Ins(3,4,5,6)P4 is an inhibitor of plasma membrane Ca(2+)-activated Cl(-) channels, while Ins(1,3,4,5,6)P5 is not. Also phosphorylates Ins(1,3,4)P3 on O-5 and O-6 to form Ins(1,3,4,6)P4, an essential molecule in the hexakisphosphate (InsP6) pathway (PubMed:8662638). Also acts as an inositol polyphosphate phosphatase that dephosphorylates Ins(1,3,4,5)P4 and Ins(1,3,4,6)P4 to Ins(1,3,4)P3, and Ins(1,3,4,5,6)P5 to Ins(3,4,5,6)P4. May also act as an isomerase that interconverts the inositol tetrakisphosphate isomers Ins(1,3,4,5)P4 and Ins(1,3,4,6)P4 in the presence of ADP and magnesium. Probably acts as the rate-limiting enzyme of the InsP6 pathway. Modifies TNF-alpha-induced apoptosis by interfering with the activation of TNFRSF1A-associated death domain. Plays an important role in MLKL-mediated necroptosis. Produces highly phosphorylated inositol phosphates such as inositolhexakisphosphate (InsP6) which bind to MLKL mediating the release of an N-terminal auto-inhibitory region leading to its activation. Essential for activated phospho-MLKL to oligomerize and localize to the cell membrane during necroptosis (By similarity).</text>
</comment>
<comment type="catalytic activity">
    <reaction evidence="4">
        <text>1D-myo-inositol 3,4,5,6-tetrakisphosphate + ATP = 1D-myo-inositol 1,3,4,5,6-pentakisphosphate + ADP + H(+)</text>
        <dbReference type="Rhea" id="RHEA:12452"/>
        <dbReference type="ChEBI" id="CHEBI:15378"/>
        <dbReference type="ChEBI" id="CHEBI:30616"/>
        <dbReference type="ChEBI" id="CHEBI:57539"/>
        <dbReference type="ChEBI" id="CHEBI:57733"/>
        <dbReference type="ChEBI" id="CHEBI:456216"/>
        <dbReference type="EC" id="2.7.1.134"/>
    </reaction>
    <physiologicalReaction direction="left-to-right" evidence="2">
        <dbReference type="Rhea" id="RHEA:12453"/>
    </physiologicalReaction>
    <physiologicalReaction direction="right-to-left" evidence="2">
        <dbReference type="Rhea" id="RHEA:12454"/>
    </physiologicalReaction>
</comment>
<comment type="catalytic activity">
    <reaction evidence="4">
        <text>1D-myo-inositol 1,3,4-trisphosphate + ATP = 1D-myo-inositol 1,3,4,5-tetrakisphosphate + ADP + H(+)</text>
        <dbReference type="Rhea" id="RHEA:13253"/>
        <dbReference type="ChEBI" id="CHEBI:15378"/>
        <dbReference type="ChEBI" id="CHEBI:30616"/>
        <dbReference type="ChEBI" id="CHEBI:57895"/>
        <dbReference type="ChEBI" id="CHEBI:58414"/>
        <dbReference type="ChEBI" id="CHEBI:456216"/>
        <dbReference type="EC" id="2.7.1.159"/>
    </reaction>
    <physiologicalReaction direction="left-to-right" evidence="2">
        <dbReference type="Rhea" id="RHEA:13254"/>
    </physiologicalReaction>
    <physiologicalReaction direction="right-to-left" evidence="2">
        <dbReference type="Rhea" id="RHEA:13255"/>
    </physiologicalReaction>
</comment>
<comment type="catalytic activity">
    <reaction evidence="4">
        <text>1D-myo-inositol 1,3,4-trisphosphate + ATP = 1D-myo-inositol 1,3,4,6-tetrakisphosphate + ADP + H(+)</text>
        <dbReference type="Rhea" id="RHEA:20940"/>
        <dbReference type="ChEBI" id="CHEBI:15378"/>
        <dbReference type="ChEBI" id="CHEBI:30616"/>
        <dbReference type="ChEBI" id="CHEBI:57660"/>
        <dbReference type="ChEBI" id="CHEBI:58414"/>
        <dbReference type="ChEBI" id="CHEBI:456216"/>
        <dbReference type="EC" id="2.7.1.159"/>
    </reaction>
    <physiologicalReaction direction="left-to-right" evidence="2">
        <dbReference type="Rhea" id="RHEA:20941"/>
    </physiologicalReaction>
    <physiologicalReaction direction="right-to-left" evidence="2">
        <dbReference type="Rhea" id="RHEA:20942"/>
    </physiologicalReaction>
</comment>
<comment type="catalytic activity">
    <reaction evidence="2">
        <text>1D-myo-inositol 3,4,6-trisphosphate + ATP = 1D-myo-inositol 1,3,4,6-tetrakisphosphate + ADP + H(+)</text>
        <dbReference type="Rhea" id="RHEA:70287"/>
        <dbReference type="ChEBI" id="CHEBI:15378"/>
        <dbReference type="ChEBI" id="CHEBI:30616"/>
        <dbReference type="ChEBI" id="CHEBI:57660"/>
        <dbReference type="ChEBI" id="CHEBI:189099"/>
        <dbReference type="ChEBI" id="CHEBI:456216"/>
    </reaction>
    <physiologicalReaction direction="left-to-right" evidence="2">
        <dbReference type="Rhea" id="RHEA:70288"/>
    </physiologicalReaction>
    <physiologicalReaction direction="right-to-left" evidence="2">
        <dbReference type="Rhea" id="RHEA:70289"/>
    </physiologicalReaction>
</comment>
<comment type="catalytic activity">
    <reaction evidence="2">
        <text>1D-myo-inositol 1,3,4-trisphosphate + 1D-myo-inositol 1,3,4,5,6-pentakisphosphate = 1D-myo-inositol 3,4,5,6-tetrakisphosphate + 1D-myo-inositol 1,3,4,6-tetrakisphosphate</text>
        <dbReference type="Rhea" id="RHEA:70263"/>
        <dbReference type="ChEBI" id="CHEBI:57539"/>
        <dbReference type="ChEBI" id="CHEBI:57660"/>
        <dbReference type="ChEBI" id="CHEBI:57733"/>
        <dbReference type="ChEBI" id="CHEBI:58414"/>
    </reaction>
    <physiologicalReaction direction="left-to-right" evidence="2">
        <dbReference type="Rhea" id="RHEA:70264"/>
    </physiologicalReaction>
    <physiologicalReaction direction="right-to-left" evidence="2">
        <dbReference type="Rhea" id="RHEA:70265"/>
    </physiologicalReaction>
</comment>
<comment type="catalytic activity">
    <reaction evidence="2">
        <text>1D-myo-inositol 1,3,4-trisphosphate + 1D-myo-inositol 1,3,4,5,6-pentakisphosphate = 1D-myo-inositol 3,4,5,6-tetrakisphosphate + 1D-myo-inositol 1,3,4,5-tetrakisphosphate</text>
        <dbReference type="Rhea" id="RHEA:70271"/>
        <dbReference type="ChEBI" id="CHEBI:57539"/>
        <dbReference type="ChEBI" id="CHEBI:57733"/>
        <dbReference type="ChEBI" id="CHEBI:57895"/>
        <dbReference type="ChEBI" id="CHEBI:58414"/>
    </reaction>
    <physiologicalReaction direction="left-to-right" evidence="2">
        <dbReference type="Rhea" id="RHEA:70272"/>
    </physiologicalReaction>
    <physiologicalReaction direction="right-to-left" evidence="2">
        <dbReference type="Rhea" id="RHEA:70273"/>
    </physiologicalReaction>
</comment>
<comment type="cofactor">
    <cofactor evidence="2">
        <name>Mg(2+)</name>
        <dbReference type="ChEBI" id="CHEBI:18420"/>
    </cofactor>
    <text evidence="2">Binds 2 magnesium ions per subunit.</text>
</comment>
<comment type="biophysicochemical properties">
    <kinetics>
        <KM evidence="4">80 nM for Ins(1,3,4)P3</KM>
        <Vmax evidence="4">60.0 nmol/min/mg enzyme with Ins(1,3,4)P3 as substrate</Vmax>
    </kinetics>
</comment>
<comment type="subunit">
    <text evidence="2">Monomer. Interacts with GPS1/COPS1.</text>
</comment>
<comment type="PTM">
    <text evidence="2">Acetylation by EP300 and CREBBP destabilizes ITPK1, and down-regulates enzymatic activity. Deacetylated by SIRT1.</text>
</comment>
<comment type="similarity">
    <text evidence="5">Belongs to the ITPK1 family.</text>
</comment>
<evidence type="ECO:0000250" key="1"/>
<evidence type="ECO:0000250" key="2">
    <source>
        <dbReference type="UniProtKB" id="Q13572"/>
    </source>
</evidence>
<evidence type="ECO:0000255" key="3">
    <source>
        <dbReference type="PROSITE-ProRule" id="PRU00409"/>
    </source>
</evidence>
<evidence type="ECO:0000269" key="4">
    <source>
    </source>
</evidence>
<evidence type="ECO:0000305" key="5"/>